<evidence type="ECO:0000255" key="1">
    <source>
        <dbReference type="HAMAP-Rule" id="MF_00360"/>
    </source>
</evidence>
<evidence type="ECO:0000256" key="2">
    <source>
        <dbReference type="SAM" id="MobiDB-lite"/>
    </source>
</evidence>
<evidence type="ECO:0000305" key="3"/>
<dbReference type="EMBL" id="BX294150">
    <property type="protein sequence ID" value="CAD76531.1"/>
    <property type="molecule type" value="Genomic_DNA"/>
</dbReference>
<dbReference type="RefSeq" id="NP_869145.1">
    <property type="nucleotide sequence ID" value="NC_005027.1"/>
</dbReference>
<dbReference type="RefSeq" id="WP_007324824.1">
    <property type="nucleotide sequence ID" value="NC_005027.1"/>
</dbReference>
<dbReference type="SMR" id="Q7UKV1"/>
<dbReference type="STRING" id="243090.RB9920"/>
<dbReference type="EnsemblBacteria" id="CAD76531">
    <property type="protein sequence ID" value="CAD76531"/>
    <property type="gene ID" value="RB9920"/>
</dbReference>
<dbReference type="KEGG" id="rba:RB9920"/>
<dbReference type="PATRIC" id="fig|243090.15.peg.4775"/>
<dbReference type="eggNOG" id="COG0360">
    <property type="taxonomic scope" value="Bacteria"/>
</dbReference>
<dbReference type="HOGENOM" id="CLU_113441_4_1_0"/>
<dbReference type="InParanoid" id="Q7UKV1"/>
<dbReference type="OrthoDB" id="290527at2"/>
<dbReference type="Proteomes" id="UP000001025">
    <property type="component" value="Chromosome"/>
</dbReference>
<dbReference type="GO" id="GO:0005737">
    <property type="term" value="C:cytoplasm"/>
    <property type="evidence" value="ECO:0007669"/>
    <property type="project" value="UniProtKB-ARBA"/>
</dbReference>
<dbReference type="GO" id="GO:1990904">
    <property type="term" value="C:ribonucleoprotein complex"/>
    <property type="evidence" value="ECO:0007669"/>
    <property type="project" value="UniProtKB-KW"/>
</dbReference>
<dbReference type="GO" id="GO:0005840">
    <property type="term" value="C:ribosome"/>
    <property type="evidence" value="ECO:0007669"/>
    <property type="project" value="UniProtKB-KW"/>
</dbReference>
<dbReference type="GO" id="GO:0070181">
    <property type="term" value="F:small ribosomal subunit rRNA binding"/>
    <property type="evidence" value="ECO:0000318"/>
    <property type="project" value="GO_Central"/>
</dbReference>
<dbReference type="GO" id="GO:0003735">
    <property type="term" value="F:structural constituent of ribosome"/>
    <property type="evidence" value="ECO:0000318"/>
    <property type="project" value="GO_Central"/>
</dbReference>
<dbReference type="GO" id="GO:0006412">
    <property type="term" value="P:translation"/>
    <property type="evidence" value="ECO:0007669"/>
    <property type="project" value="UniProtKB-UniRule"/>
</dbReference>
<dbReference type="CDD" id="cd00473">
    <property type="entry name" value="bS6"/>
    <property type="match status" value="1"/>
</dbReference>
<dbReference type="FunFam" id="3.30.70.60:FF:000025">
    <property type="entry name" value="30S ribosomal protein S6"/>
    <property type="match status" value="1"/>
</dbReference>
<dbReference type="Gene3D" id="3.30.70.60">
    <property type="match status" value="1"/>
</dbReference>
<dbReference type="HAMAP" id="MF_00360">
    <property type="entry name" value="Ribosomal_bS6"/>
    <property type="match status" value="1"/>
</dbReference>
<dbReference type="InterPro" id="IPR000529">
    <property type="entry name" value="Ribosomal_bS6"/>
</dbReference>
<dbReference type="InterPro" id="IPR035980">
    <property type="entry name" value="Ribosomal_bS6_sf"/>
</dbReference>
<dbReference type="InterPro" id="IPR020814">
    <property type="entry name" value="Ribosomal_S6_plastid/chlpt"/>
</dbReference>
<dbReference type="InterPro" id="IPR014717">
    <property type="entry name" value="Transl_elong_EF1B/ribsomal_bS6"/>
</dbReference>
<dbReference type="NCBIfam" id="TIGR00166">
    <property type="entry name" value="S6"/>
    <property type="match status" value="1"/>
</dbReference>
<dbReference type="PANTHER" id="PTHR21011">
    <property type="entry name" value="MITOCHONDRIAL 28S RIBOSOMAL PROTEIN S6"/>
    <property type="match status" value="1"/>
</dbReference>
<dbReference type="PANTHER" id="PTHR21011:SF1">
    <property type="entry name" value="SMALL RIBOSOMAL SUBUNIT PROTEIN BS6M"/>
    <property type="match status" value="1"/>
</dbReference>
<dbReference type="Pfam" id="PF01250">
    <property type="entry name" value="Ribosomal_S6"/>
    <property type="match status" value="1"/>
</dbReference>
<dbReference type="SUPFAM" id="SSF54995">
    <property type="entry name" value="Ribosomal protein S6"/>
    <property type="match status" value="1"/>
</dbReference>
<keyword id="KW-1185">Reference proteome</keyword>
<keyword id="KW-0687">Ribonucleoprotein</keyword>
<keyword id="KW-0689">Ribosomal protein</keyword>
<keyword id="KW-0694">RNA-binding</keyword>
<keyword id="KW-0699">rRNA-binding</keyword>
<name>RS6_RHOBA</name>
<comment type="function">
    <text evidence="1">Binds together with bS18 to 16S ribosomal RNA.</text>
</comment>
<comment type="similarity">
    <text evidence="1">Belongs to the bacterial ribosomal protein bS6 family.</text>
</comment>
<sequence>MAKVNTYETLFILDSNHYARDPGGVAKQLEELIAENGGEVQVSRMWMEQKLAYPIDKHQKGTYYLIYFSMEGPNLTQLARAFALAEPVIRELTIKLDPRLVEPILANARGEHFTGPAGAEGSDDESTESTDEAVAETADA</sequence>
<proteinExistence type="inferred from homology"/>
<gene>
    <name evidence="1" type="primary">rpsF</name>
    <name type="ordered locus">RB9920</name>
</gene>
<accession>Q7UKV1</accession>
<protein>
    <recommendedName>
        <fullName evidence="1">Small ribosomal subunit protein bS6</fullName>
    </recommendedName>
    <alternativeName>
        <fullName evidence="3">30S ribosomal protein S6</fullName>
    </alternativeName>
</protein>
<reference key="1">
    <citation type="journal article" date="2003" name="Proc. Natl. Acad. Sci. U.S.A.">
        <title>Complete genome sequence of the marine planctomycete Pirellula sp. strain 1.</title>
        <authorList>
            <person name="Gloeckner F.O."/>
            <person name="Kube M."/>
            <person name="Bauer M."/>
            <person name="Teeling H."/>
            <person name="Lombardot T."/>
            <person name="Ludwig W."/>
            <person name="Gade D."/>
            <person name="Beck A."/>
            <person name="Borzym K."/>
            <person name="Heitmann K."/>
            <person name="Rabus R."/>
            <person name="Schlesner H."/>
            <person name="Amann R."/>
            <person name="Reinhardt R."/>
        </authorList>
    </citation>
    <scope>NUCLEOTIDE SEQUENCE [LARGE SCALE GENOMIC DNA]</scope>
    <source>
        <strain>DSM 10527 / NCIMB 13988 / SH1</strain>
    </source>
</reference>
<organism>
    <name type="scientific">Rhodopirellula baltica (strain DSM 10527 / NCIMB 13988 / SH1)</name>
    <dbReference type="NCBI Taxonomy" id="243090"/>
    <lineage>
        <taxon>Bacteria</taxon>
        <taxon>Pseudomonadati</taxon>
        <taxon>Planctomycetota</taxon>
        <taxon>Planctomycetia</taxon>
        <taxon>Pirellulales</taxon>
        <taxon>Pirellulaceae</taxon>
        <taxon>Rhodopirellula</taxon>
    </lineage>
</organism>
<feature type="chain" id="PRO_0000176825" description="Small ribosomal subunit protein bS6">
    <location>
        <begin position="1"/>
        <end position="140"/>
    </location>
</feature>
<feature type="region of interest" description="Disordered" evidence="2">
    <location>
        <begin position="111"/>
        <end position="140"/>
    </location>
</feature>
<feature type="compositionally biased region" description="Acidic residues" evidence="2">
    <location>
        <begin position="121"/>
        <end position="140"/>
    </location>
</feature>